<comment type="function">
    <text>The B protein acts as a regulator of electron flow through the soluble mmo complex, switching the enzyme from an oxidase to a hydroxylase in the presence of the substrate.</text>
</comment>
<comment type="subunit">
    <text>The soluble methane monooxygenase (sMMO) consists of four components A/MMOH (composed of alpha/MmoX, beta/MmoY and gamma/MmoZ), B/MMOB (MmoB), C/MMOR (MmoC) and D/MMOD (MmoD).</text>
</comment>
<comment type="similarity">
    <text evidence="1">Belongs to the TmoD/XamoD family.</text>
</comment>
<protein>
    <recommendedName>
        <fullName>Methane monooxygenase regulatory protein B</fullName>
    </recommendedName>
</protein>
<dbReference type="EMBL" id="M90050">
    <property type="protein sequence ID" value="AAF04158.2"/>
    <property type="molecule type" value="Genomic_DNA"/>
</dbReference>
<dbReference type="EMBL" id="AE017282">
    <property type="protein sequence ID" value="AAU92726.1"/>
    <property type="molecule type" value="Genomic_DNA"/>
</dbReference>
<dbReference type="PIR" id="JL0103">
    <property type="entry name" value="JL0103"/>
</dbReference>
<dbReference type="RefSeq" id="WP_010960484.1">
    <property type="nucleotide sequence ID" value="NC_002977.6"/>
</dbReference>
<dbReference type="PDB" id="1CKV">
    <property type="method" value="NMR"/>
    <property type="chains" value="A=1-141"/>
</dbReference>
<dbReference type="PDB" id="4GAM">
    <property type="method" value="X-ray"/>
    <property type="resolution" value="2.90 A"/>
    <property type="chains" value="D/I/N/S=1-141"/>
</dbReference>
<dbReference type="PDBsum" id="1CKV"/>
<dbReference type="PDBsum" id="4GAM"/>
<dbReference type="BMRB" id="P18797"/>
<dbReference type="SMR" id="P18797"/>
<dbReference type="DIP" id="DIP-60130N"/>
<dbReference type="IntAct" id="P18797">
    <property type="interactions" value="1"/>
</dbReference>
<dbReference type="STRING" id="243233.MCA1196"/>
<dbReference type="GeneID" id="88223483"/>
<dbReference type="KEGG" id="mca:MCA1196"/>
<dbReference type="eggNOG" id="ENOG502ZPSX">
    <property type="taxonomic scope" value="Bacteria"/>
</dbReference>
<dbReference type="HOGENOM" id="CLU_1823101_0_0_6"/>
<dbReference type="BioCyc" id="MetaCyc:MONOMER-3865"/>
<dbReference type="BRENDA" id="1.14.13.25">
    <property type="organism ID" value="3305"/>
</dbReference>
<dbReference type="EvolutionaryTrace" id="P18797"/>
<dbReference type="Proteomes" id="UP000006821">
    <property type="component" value="Chromosome"/>
</dbReference>
<dbReference type="GO" id="GO:0004497">
    <property type="term" value="F:monooxygenase activity"/>
    <property type="evidence" value="ECO:0007669"/>
    <property type="project" value="UniProtKB-KW"/>
</dbReference>
<dbReference type="Gene3D" id="3.90.56.10">
    <property type="entry name" value="Monooxygenase component MmoB/DmpM"/>
    <property type="match status" value="1"/>
</dbReference>
<dbReference type="InterPro" id="IPR054955">
    <property type="entry name" value="MethMoxRegMmoB"/>
</dbReference>
<dbReference type="InterPro" id="IPR003454">
    <property type="entry name" value="MOase_MmoB_DmpM"/>
</dbReference>
<dbReference type="InterPro" id="IPR036889">
    <property type="entry name" value="mOase_MmoB_DmpM_sf"/>
</dbReference>
<dbReference type="NCBIfam" id="NF045804">
    <property type="entry name" value="MethMoxRegMmoB"/>
    <property type="match status" value="1"/>
</dbReference>
<dbReference type="Pfam" id="PF02406">
    <property type="entry name" value="MmoB_DmpM"/>
    <property type="match status" value="1"/>
</dbReference>
<dbReference type="SUPFAM" id="SSF56029">
    <property type="entry name" value="Monooxygenase (hydroxylase) regulatory protein"/>
    <property type="match status" value="1"/>
</dbReference>
<sequence>MSVNSNAYDAGIMGLKGKDFADQFFADENQVVHESDTVVLVLKKSDEINTFIEEILLTDYKKNVNPTVNVEDRAGYWWIKANGKIEVDCDEISELLGRQFNVYDFLVDVSSTIGRAYTLGNKFTITSELMGLDRKLEDYHA</sequence>
<feature type="chain" id="PRO_0000096507" description="Methane monooxygenase regulatory protein B">
    <location>
        <begin position="1"/>
        <end position="141"/>
    </location>
</feature>
<feature type="sequence conflict" description="In Ref. 1 and 4." evidence="1" ref="1 4">
    <original>I</original>
    <variation>F</variation>
    <location>
        <position position="12"/>
    </location>
</feature>
<feature type="strand" evidence="2">
    <location>
        <begin position="4"/>
        <end position="7"/>
    </location>
</feature>
<feature type="turn" evidence="2">
    <location>
        <begin position="11"/>
        <end position="14"/>
    </location>
</feature>
<feature type="helix" evidence="2">
    <location>
        <begin position="18"/>
        <end position="25"/>
    </location>
</feature>
<feature type="helix" evidence="2">
    <location>
        <begin position="28"/>
        <end position="30"/>
    </location>
</feature>
<feature type="strand" evidence="2">
    <location>
        <begin position="37"/>
        <end position="43"/>
    </location>
</feature>
<feature type="helix" evidence="2">
    <location>
        <begin position="46"/>
        <end position="54"/>
    </location>
</feature>
<feature type="turn" evidence="2">
    <location>
        <begin position="55"/>
        <end position="58"/>
    </location>
</feature>
<feature type="helix" evidence="2">
    <location>
        <begin position="59"/>
        <end position="63"/>
    </location>
</feature>
<feature type="strand" evidence="2">
    <location>
        <begin position="69"/>
        <end position="72"/>
    </location>
</feature>
<feature type="strand" evidence="2">
    <location>
        <begin position="74"/>
        <end position="88"/>
    </location>
</feature>
<feature type="helix" evidence="2">
    <location>
        <begin position="89"/>
        <end position="96"/>
    </location>
</feature>
<feature type="helix" evidence="2">
    <location>
        <begin position="102"/>
        <end position="105"/>
    </location>
</feature>
<feature type="strand" evidence="2">
    <location>
        <begin position="108"/>
        <end position="128"/>
    </location>
</feature>
<feature type="turn" evidence="2">
    <location>
        <begin position="130"/>
        <end position="132"/>
    </location>
</feature>
<proteinExistence type="evidence at protein level"/>
<accession>P18797</accession>
<accession>Q609N6</accession>
<accession>Q9LCT7</accession>
<gene>
    <name type="primary">mmoB</name>
    <name type="ordered locus">MCA1196</name>
</gene>
<name>MMOB_METCA</name>
<keyword id="KW-0002">3D-structure</keyword>
<keyword id="KW-0903">Direct protein sequencing</keyword>
<keyword id="KW-0503">Monooxygenase</keyword>
<keyword id="KW-0560">Oxidoreductase</keyword>
<keyword id="KW-1185">Reference proteome</keyword>
<organism>
    <name type="scientific">Methylococcus capsulatus (strain ATCC 33009 / NCIMB 11132 / Bath)</name>
    <dbReference type="NCBI Taxonomy" id="243233"/>
    <lineage>
        <taxon>Bacteria</taxon>
        <taxon>Pseudomonadati</taxon>
        <taxon>Pseudomonadota</taxon>
        <taxon>Gammaproteobacteria</taxon>
        <taxon>Methylococcales</taxon>
        <taxon>Methylococcaceae</taxon>
        <taxon>Methylococcus</taxon>
    </lineage>
</organism>
<reference key="1">
    <citation type="journal article" date="1989" name="Arch. Microbiol.">
        <title>Molecular analysis of methane monooxygenase from Methylococcus capsulatus (Bath).</title>
        <authorList>
            <person name="Stainthorpe A.C."/>
            <person name="Murrell J.C."/>
            <person name="Salmond G.P.C."/>
            <person name="Dalton H."/>
            <person name="Lees V."/>
        </authorList>
    </citation>
    <scope>NUCLEOTIDE SEQUENCE [GENOMIC DNA]</scope>
    <source>
        <strain>ATCC 33009 / NCIMB 11132 / Bath</strain>
    </source>
</reference>
<reference key="2">
    <citation type="submission" date="1999-10" db="EMBL/GenBank/DDBJ databases">
        <authorList>
            <person name="McDonald I."/>
            <person name="Murrell J.C."/>
        </authorList>
    </citation>
    <scope>NUCLEOTIDE SEQUENCE [GENOMIC DNA]</scope>
</reference>
<reference key="3">
    <citation type="journal article" date="2004" name="PLoS Biol.">
        <title>Genomic insights into methanotrophy: the complete genome sequence of Methylococcus capsulatus (Bath).</title>
        <authorList>
            <person name="Ward N.L."/>
            <person name="Larsen O."/>
            <person name="Sakwa J."/>
            <person name="Bruseth L."/>
            <person name="Khouri H.M."/>
            <person name="Durkin A.S."/>
            <person name="Dimitrov G."/>
            <person name="Jiang L."/>
            <person name="Scanlan D."/>
            <person name="Kang K.H."/>
            <person name="Lewis M.R."/>
            <person name="Nelson K.E."/>
            <person name="Methe B.A."/>
            <person name="Wu M."/>
            <person name="Heidelberg J.F."/>
            <person name="Paulsen I.T."/>
            <person name="Fouts D.E."/>
            <person name="Ravel J."/>
            <person name="Tettelin H."/>
            <person name="Ren Q."/>
            <person name="Read T.D."/>
            <person name="DeBoy R.T."/>
            <person name="Seshadri R."/>
            <person name="Salzberg S.L."/>
            <person name="Jensen H.B."/>
            <person name="Birkeland N.K."/>
            <person name="Nelson W.C."/>
            <person name="Dodson R.J."/>
            <person name="Grindhaug S.H."/>
            <person name="Holt I.E."/>
            <person name="Eidhammer I."/>
            <person name="Jonasen I."/>
            <person name="Vanaken S."/>
            <person name="Utterback T.R."/>
            <person name="Feldblyum T.V."/>
            <person name="Fraser C.M."/>
            <person name="Lillehaug J.R."/>
            <person name="Eisen J.A."/>
        </authorList>
    </citation>
    <scope>NUCLEOTIDE SEQUENCE [LARGE SCALE GENOMIC DNA]</scope>
    <source>
        <strain>ATCC 33009 / NCIMB 11132 / Bath</strain>
    </source>
</reference>
<reference key="4">
    <citation type="journal article" date="1990" name="FEMS Microbiol. Lett.">
        <title>Identification of the gene encoding the regulatory protein B of soluble methane monooxygenase.</title>
        <authorList>
            <person name="Pilkington S.J."/>
            <person name="Salmond G.P.C."/>
            <person name="Murrell J.C."/>
            <person name="Dalton H."/>
        </authorList>
    </citation>
    <scope>IDENTIFICATION OF PROTEIN</scope>
    <scope>PROTEIN SEQUENCE OF 3-19</scope>
</reference>
<reference key="5">
    <citation type="journal article" date="1999" name="Proc. Natl. Acad. Sci. U.S.A.">
        <title>Structure of the soluble methane monooxygenase regulatory protein B.</title>
        <authorList>
            <person name="Walters K.J."/>
            <person name="Gassner G.T."/>
            <person name="Lippard S.J."/>
            <person name="Wagner G."/>
        </authorList>
    </citation>
    <scope>STRUCTURE BY NMR</scope>
</reference>
<reference key="6">
    <citation type="journal article" date="1999" name="Chem. Biol.">
        <title>Mutational and structural analyses of the regulatory protein B of soluble methane monooxygenase from Methylococcus capsulatus (Bath).</title>
        <authorList>
            <person name="Brandstetter H."/>
            <person name="Whittington D.A."/>
            <person name="Lippard S.J."/>
            <person name="Frederick C.A."/>
        </authorList>
    </citation>
    <scope>CIRCULAR DICHROISM ANALYSIS</scope>
    <scope>3D-STRUCTURE MODELING</scope>
</reference>
<evidence type="ECO:0000305" key="1"/>
<evidence type="ECO:0007829" key="2">
    <source>
        <dbReference type="PDB" id="4GAM"/>
    </source>
</evidence>